<sequence length="130" mass="14615">MSATQNYGTGRRKTATARVFLRPGTGKISINNRGLDQFFGRETARMVVRQPLELTETVEKFDIFVTVVGGGVSGQAGAIRHGITRALIEYDETLRSSLRKAGYVTRDAREVERKKVGLRKARKRPQYSKR</sequence>
<evidence type="ECO:0000255" key="1">
    <source>
        <dbReference type="HAMAP-Rule" id="MF_00532"/>
    </source>
</evidence>
<evidence type="ECO:0000305" key="2"/>
<accession>Q9HVY3</accession>
<proteinExistence type="evidence at protein level"/>
<name>RS9_PSEAE</name>
<comment type="similarity">
    <text evidence="1">Belongs to the universal ribosomal protein uS9 family.</text>
</comment>
<protein>
    <recommendedName>
        <fullName evidence="1">Small ribosomal subunit protein uS9</fullName>
    </recommendedName>
    <alternativeName>
        <fullName evidence="2">30S ribosomal protein S9</fullName>
    </alternativeName>
</protein>
<feature type="chain" id="PRO_0000111391" description="Small ribosomal subunit protein uS9">
    <location>
        <begin position="1"/>
        <end position="130"/>
    </location>
</feature>
<dbReference type="EMBL" id="AE004091">
    <property type="protein sequence ID" value="AAG07820.1"/>
    <property type="molecule type" value="Genomic_DNA"/>
</dbReference>
<dbReference type="PIR" id="H83092">
    <property type="entry name" value="H83092"/>
</dbReference>
<dbReference type="RefSeq" id="NP_253122.1">
    <property type="nucleotide sequence ID" value="NC_002516.2"/>
</dbReference>
<dbReference type="RefSeq" id="WP_003098810.1">
    <property type="nucleotide sequence ID" value="NZ_QZGE01000004.1"/>
</dbReference>
<dbReference type="PDB" id="7UNR">
    <property type="method" value="EM"/>
    <property type="resolution" value="2.90 A"/>
    <property type="chains" value="i=1-130"/>
</dbReference>
<dbReference type="PDB" id="7UNU">
    <property type="method" value="EM"/>
    <property type="resolution" value="2.90 A"/>
    <property type="chains" value="i=1-130"/>
</dbReference>
<dbReference type="PDB" id="7UNV">
    <property type="method" value="EM"/>
    <property type="resolution" value="2.70 A"/>
    <property type="chains" value="i=1-130"/>
</dbReference>
<dbReference type="PDB" id="7UNW">
    <property type="method" value="EM"/>
    <property type="resolution" value="2.60 A"/>
    <property type="chains" value="i=1-130"/>
</dbReference>
<dbReference type="PDB" id="8CD1">
    <property type="method" value="EM"/>
    <property type="resolution" value="3.00 A"/>
    <property type="chains" value="i=1-130"/>
</dbReference>
<dbReference type="PDB" id="8RWG">
    <property type="method" value="EM"/>
    <property type="resolution" value="2.46 A"/>
    <property type="chains" value="h=1-130"/>
</dbReference>
<dbReference type="PDBsum" id="7UNR"/>
<dbReference type="PDBsum" id="7UNU"/>
<dbReference type="PDBsum" id="7UNV"/>
<dbReference type="PDBsum" id="7UNW"/>
<dbReference type="PDBsum" id="8CD1"/>
<dbReference type="PDBsum" id="8RWG"/>
<dbReference type="EMDB" id="EMD-16566"/>
<dbReference type="EMDB" id="EMD-19547"/>
<dbReference type="EMDB" id="EMD-26630"/>
<dbReference type="EMDB" id="EMD-26633"/>
<dbReference type="EMDB" id="EMD-26634"/>
<dbReference type="EMDB" id="EMD-26635"/>
<dbReference type="SMR" id="Q9HVY3"/>
<dbReference type="FunCoup" id="Q9HVY3">
    <property type="interactions" value="976"/>
</dbReference>
<dbReference type="STRING" id="208964.PA4432"/>
<dbReference type="PaxDb" id="208964-PA4432"/>
<dbReference type="DNASU" id="881274"/>
<dbReference type="GeneID" id="881274"/>
<dbReference type="KEGG" id="pae:PA4432"/>
<dbReference type="PATRIC" id="fig|208964.12.peg.4641"/>
<dbReference type="PseudoCAP" id="PA4432"/>
<dbReference type="HOGENOM" id="CLU_046483_2_1_6"/>
<dbReference type="InParanoid" id="Q9HVY3"/>
<dbReference type="OrthoDB" id="9803965at2"/>
<dbReference type="PhylomeDB" id="Q9HVY3"/>
<dbReference type="BioCyc" id="PAER208964:G1FZ6-4520-MONOMER"/>
<dbReference type="PRO" id="PR:Q9HVY3"/>
<dbReference type="Proteomes" id="UP000002438">
    <property type="component" value="Chromosome"/>
</dbReference>
<dbReference type="GO" id="GO:0022627">
    <property type="term" value="C:cytosolic small ribosomal subunit"/>
    <property type="evidence" value="ECO:0000318"/>
    <property type="project" value="GO_Central"/>
</dbReference>
<dbReference type="GO" id="GO:0003723">
    <property type="term" value="F:RNA binding"/>
    <property type="evidence" value="ECO:0000318"/>
    <property type="project" value="GO_Central"/>
</dbReference>
<dbReference type="GO" id="GO:0003735">
    <property type="term" value="F:structural constituent of ribosome"/>
    <property type="evidence" value="ECO:0000318"/>
    <property type="project" value="GO_Central"/>
</dbReference>
<dbReference type="GO" id="GO:0006412">
    <property type="term" value="P:translation"/>
    <property type="evidence" value="ECO:0007669"/>
    <property type="project" value="UniProtKB-UniRule"/>
</dbReference>
<dbReference type="FunFam" id="3.30.230.10:FF:000001">
    <property type="entry name" value="30S ribosomal protein S9"/>
    <property type="match status" value="1"/>
</dbReference>
<dbReference type="Gene3D" id="3.30.230.10">
    <property type="match status" value="1"/>
</dbReference>
<dbReference type="HAMAP" id="MF_00532_B">
    <property type="entry name" value="Ribosomal_uS9_B"/>
    <property type="match status" value="1"/>
</dbReference>
<dbReference type="InterPro" id="IPR020568">
    <property type="entry name" value="Ribosomal_Su5_D2-typ_SF"/>
</dbReference>
<dbReference type="InterPro" id="IPR000754">
    <property type="entry name" value="Ribosomal_uS9"/>
</dbReference>
<dbReference type="InterPro" id="IPR023035">
    <property type="entry name" value="Ribosomal_uS9_bac/plastid"/>
</dbReference>
<dbReference type="InterPro" id="IPR020574">
    <property type="entry name" value="Ribosomal_uS9_CS"/>
</dbReference>
<dbReference type="InterPro" id="IPR014721">
    <property type="entry name" value="Ribsml_uS5_D2-typ_fold_subgr"/>
</dbReference>
<dbReference type="NCBIfam" id="NF001099">
    <property type="entry name" value="PRK00132.1"/>
    <property type="match status" value="1"/>
</dbReference>
<dbReference type="PANTHER" id="PTHR21569">
    <property type="entry name" value="RIBOSOMAL PROTEIN S9"/>
    <property type="match status" value="1"/>
</dbReference>
<dbReference type="PANTHER" id="PTHR21569:SF1">
    <property type="entry name" value="SMALL RIBOSOMAL SUBUNIT PROTEIN US9M"/>
    <property type="match status" value="1"/>
</dbReference>
<dbReference type="Pfam" id="PF00380">
    <property type="entry name" value="Ribosomal_S9"/>
    <property type="match status" value="1"/>
</dbReference>
<dbReference type="SUPFAM" id="SSF54211">
    <property type="entry name" value="Ribosomal protein S5 domain 2-like"/>
    <property type="match status" value="1"/>
</dbReference>
<dbReference type="PROSITE" id="PS00360">
    <property type="entry name" value="RIBOSOMAL_S9"/>
    <property type="match status" value="1"/>
</dbReference>
<gene>
    <name evidence="1" type="primary">rpsI</name>
    <name type="ordered locus">PA4432</name>
</gene>
<keyword id="KW-0002">3D-structure</keyword>
<keyword id="KW-1185">Reference proteome</keyword>
<keyword id="KW-0687">Ribonucleoprotein</keyword>
<keyword id="KW-0689">Ribosomal protein</keyword>
<reference key="1">
    <citation type="journal article" date="2000" name="Nature">
        <title>Complete genome sequence of Pseudomonas aeruginosa PAO1, an opportunistic pathogen.</title>
        <authorList>
            <person name="Stover C.K."/>
            <person name="Pham X.-Q.T."/>
            <person name="Erwin A.L."/>
            <person name="Mizoguchi S.D."/>
            <person name="Warrener P."/>
            <person name="Hickey M.J."/>
            <person name="Brinkman F.S.L."/>
            <person name="Hufnagle W.O."/>
            <person name="Kowalik D.J."/>
            <person name="Lagrou M."/>
            <person name="Garber R.L."/>
            <person name="Goltry L."/>
            <person name="Tolentino E."/>
            <person name="Westbrock-Wadman S."/>
            <person name="Yuan Y."/>
            <person name="Brody L.L."/>
            <person name="Coulter S.N."/>
            <person name="Folger K.R."/>
            <person name="Kas A."/>
            <person name="Larbig K."/>
            <person name="Lim R.M."/>
            <person name="Smith K.A."/>
            <person name="Spencer D.H."/>
            <person name="Wong G.K.-S."/>
            <person name="Wu Z."/>
            <person name="Paulsen I.T."/>
            <person name="Reizer J."/>
            <person name="Saier M.H. Jr."/>
            <person name="Hancock R.E.W."/>
            <person name="Lory S."/>
            <person name="Olson M.V."/>
        </authorList>
    </citation>
    <scope>NUCLEOTIDE SEQUENCE [LARGE SCALE GENOMIC DNA]</scope>
    <source>
        <strain>ATCC 15692 / DSM 22644 / CIP 104116 / JCM 14847 / LMG 12228 / 1C / PRS 101 / PAO1</strain>
    </source>
</reference>
<organism>
    <name type="scientific">Pseudomonas aeruginosa (strain ATCC 15692 / DSM 22644 / CIP 104116 / JCM 14847 / LMG 12228 / 1C / PRS 101 / PAO1)</name>
    <dbReference type="NCBI Taxonomy" id="208964"/>
    <lineage>
        <taxon>Bacteria</taxon>
        <taxon>Pseudomonadati</taxon>
        <taxon>Pseudomonadota</taxon>
        <taxon>Gammaproteobacteria</taxon>
        <taxon>Pseudomonadales</taxon>
        <taxon>Pseudomonadaceae</taxon>
        <taxon>Pseudomonas</taxon>
    </lineage>
</organism>